<dbReference type="EC" id="6.1.1.16" evidence="1"/>
<dbReference type="EMBL" id="CP001600">
    <property type="protein sequence ID" value="ACR70159.1"/>
    <property type="molecule type" value="Genomic_DNA"/>
</dbReference>
<dbReference type="RefSeq" id="WP_015872251.1">
    <property type="nucleotide sequence ID" value="NZ_CP169062.1"/>
</dbReference>
<dbReference type="SMR" id="C5B8V6"/>
<dbReference type="STRING" id="67780.B6E78_06905"/>
<dbReference type="GeneID" id="69539882"/>
<dbReference type="KEGG" id="eic:NT01EI_3006"/>
<dbReference type="PATRIC" id="fig|634503.3.peg.2687"/>
<dbReference type="HOGENOM" id="CLU_013528_0_1_6"/>
<dbReference type="OrthoDB" id="9815130at2"/>
<dbReference type="Proteomes" id="UP000001485">
    <property type="component" value="Chromosome"/>
</dbReference>
<dbReference type="GO" id="GO:0005829">
    <property type="term" value="C:cytosol"/>
    <property type="evidence" value="ECO:0007669"/>
    <property type="project" value="TreeGrafter"/>
</dbReference>
<dbReference type="GO" id="GO:0005524">
    <property type="term" value="F:ATP binding"/>
    <property type="evidence" value="ECO:0007669"/>
    <property type="project" value="UniProtKB-UniRule"/>
</dbReference>
<dbReference type="GO" id="GO:0004817">
    <property type="term" value="F:cysteine-tRNA ligase activity"/>
    <property type="evidence" value="ECO:0007669"/>
    <property type="project" value="UniProtKB-UniRule"/>
</dbReference>
<dbReference type="GO" id="GO:0008270">
    <property type="term" value="F:zinc ion binding"/>
    <property type="evidence" value="ECO:0007669"/>
    <property type="project" value="UniProtKB-UniRule"/>
</dbReference>
<dbReference type="GO" id="GO:0006423">
    <property type="term" value="P:cysteinyl-tRNA aminoacylation"/>
    <property type="evidence" value="ECO:0007669"/>
    <property type="project" value="UniProtKB-UniRule"/>
</dbReference>
<dbReference type="CDD" id="cd07963">
    <property type="entry name" value="Anticodon_Ia_Cys"/>
    <property type="match status" value="1"/>
</dbReference>
<dbReference type="CDD" id="cd00672">
    <property type="entry name" value="CysRS_core"/>
    <property type="match status" value="1"/>
</dbReference>
<dbReference type="FunFam" id="1.20.120.1910:FF:000001">
    <property type="entry name" value="Cysteine--tRNA ligase"/>
    <property type="match status" value="1"/>
</dbReference>
<dbReference type="FunFam" id="3.40.50.620:FF:000009">
    <property type="entry name" value="Cysteine--tRNA ligase"/>
    <property type="match status" value="1"/>
</dbReference>
<dbReference type="Gene3D" id="1.20.120.1910">
    <property type="entry name" value="Cysteine-tRNA ligase, C-terminal anti-codon recognition domain"/>
    <property type="match status" value="1"/>
</dbReference>
<dbReference type="Gene3D" id="3.40.50.620">
    <property type="entry name" value="HUPs"/>
    <property type="match status" value="1"/>
</dbReference>
<dbReference type="HAMAP" id="MF_00041">
    <property type="entry name" value="Cys_tRNA_synth"/>
    <property type="match status" value="1"/>
</dbReference>
<dbReference type="InterPro" id="IPR015803">
    <property type="entry name" value="Cys-tRNA-ligase"/>
</dbReference>
<dbReference type="InterPro" id="IPR015273">
    <property type="entry name" value="Cys-tRNA-synt_Ia_DALR"/>
</dbReference>
<dbReference type="InterPro" id="IPR024909">
    <property type="entry name" value="Cys-tRNA/MSH_ligase"/>
</dbReference>
<dbReference type="InterPro" id="IPR056411">
    <property type="entry name" value="CysS_C"/>
</dbReference>
<dbReference type="InterPro" id="IPR014729">
    <property type="entry name" value="Rossmann-like_a/b/a_fold"/>
</dbReference>
<dbReference type="InterPro" id="IPR032678">
    <property type="entry name" value="tRNA-synt_1_cat_dom"/>
</dbReference>
<dbReference type="InterPro" id="IPR009080">
    <property type="entry name" value="tRNAsynth_Ia_anticodon-bd"/>
</dbReference>
<dbReference type="NCBIfam" id="TIGR00435">
    <property type="entry name" value="cysS"/>
    <property type="match status" value="1"/>
</dbReference>
<dbReference type="PANTHER" id="PTHR10890:SF3">
    <property type="entry name" value="CYSTEINE--TRNA LIGASE, CYTOPLASMIC"/>
    <property type="match status" value="1"/>
</dbReference>
<dbReference type="PANTHER" id="PTHR10890">
    <property type="entry name" value="CYSTEINYL-TRNA SYNTHETASE"/>
    <property type="match status" value="1"/>
</dbReference>
<dbReference type="Pfam" id="PF23493">
    <property type="entry name" value="CysS_C"/>
    <property type="match status" value="1"/>
</dbReference>
<dbReference type="Pfam" id="PF09190">
    <property type="entry name" value="DALR_2"/>
    <property type="match status" value="1"/>
</dbReference>
<dbReference type="Pfam" id="PF01406">
    <property type="entry name" value="tRNA-synt_1e"/>
    <property type="match status" value="1"/>
</dbReference>
<dbReference type="PRINTS" id="PR00983">
    <property type="entry name" value="TRNASYNTHCYS"/>
</dbReference>
<dbReference type="SMART" id="SM00840">
    <property type="entry name" value="DALR_2"/>
    <property type="match status" value="1"/>
</dbReference>
<dbReference type="SUPFAM" id="SSF47323">
    <property type="entry name" value="Anticodon-binding domain of a subclass of class I aminoacyl-tRNA synthetases"/>
    <property type="match status" value="1"/>
</dbReference>
<dbReference type="SUPFAM" id="SSF52374">
    <property type="entry name" value="Nucleotidylyl transferase"/>
    <property type="match status" value="1"/>
</dbReference>
<name>SYC_EDWI9</name>
<accession>C5B8V6</accession>
<comment type="catalytic activity">
    <reaction evidence="1">
        <text>tRNA(Cys) + L-cysteine + ATP = L-cysteinyl-tRNA(Cys) + AMP + diphosphate</text>
        <dbReference type="Rhea" id="RHEA:17773"/>
        <dbReference type="Rhea" id="RHEA-COMP:9661"/>
        <dbReference type="Rhea" id="RHEA-COMP:9679"/>
        <dbReference type="ChEBI" id="CHEBI:30616"/>
        <dbReference type="ChEBI" id="CHEBI:33019"/>
        <dbReference type="ChEBI" id="CHEBI:35235"/>
        <dbReference type="ChEBI" id="CHEBI:78442"/>
        <dbReference type="ChEBI" id="CHEBI:78517"/>
        <dbReference type="ChEBI" id="CHEBI:456215"/>
        <dbReference type="EC" id="6.1.1.16"/>
    </reaction>
</comment>
<comment type="cofactor">
    <cofactor evidence="1">
        <name>Zn(2+)</name>
        <dbReference type="ChEBI" id="CHEBI:29105"/>
    </cofactor>
    <text evidence="1">Binds 1 zinc ion per subunit.</text>
</comment>
<comment type="subunit">
    <text evidence="1">Monomer.</text>
</comment>
<comment type="subcellular location">
    <subcellularLocation>
        <location evidence="1">Cytoplasm</location>
    </subcellularLocation>
</comment>
<comment type="similarity">
    <text evidence="1">Belongs to the class-I aminoacyl-tRNA synthetase family.</text>
</comment>
<gene>
    <name evidence="1" type="primary">cysS</name>
    <name type="ordered locus">NT01EI_3006</name>
</gene>
<protein>
    <recommendedName>
        <fullName evidence="1">Cysteine--tRNA ligase</fullName>
        <ecNumber evidence="1">6.1.1.16</ecNumber>
    </recommendedName>
    <alternativeName>
        <fullName evidence="1">Cysteinyl-tRNA synthetase</fullName>
        <shortName evidence="1">CysRS</shortName>
    </alternativeName>
</protein>
<reference key="1">
    <citation type="submission" date="2009-03" db="EMBL/GenBank/DDBJ databases">
        <title>Complete genome sequence of Edwardsiella ictaluri 93-146.</title>
        <authorList>
            <person name="Williams M.L."/>
            <person name="Gillaspy A.F."/>
            <person name="Dyer D.W."/>
            <person name="Thune R.L."/>
            <person name="Waldbieser G.C."/>
            <person name="Schuster S.C."/>
            <person name="Gipson J."/>
            <person name="Zaitshik J."/>
            <person name="Landry C."/>
            <person name="Lawrence M.L."/>
        </authorList>
    </citation>
    <scope>NUCLEOTIDE SEQUENCE [LARGE SCALE GENOMIC DNA]</scope>
    <source>
        <strain>93-146</strain>
    </source>
</reference>
<organism>
    <name type="scientific">Edwardsiella ictaluri (strain 93-146)</name>
    <dbReference type="NCBI Taxonomy" id="634503"/>
    <lineage>
        <taxon>Bacteria</taxon>
        <taxon>Pseudomonadati</taxon>
        <taxon>Pseudomonadota</taxon>
        <taxon>Gammaproteobacteria</taxon>
        <taxon>Enterobacterales</taxon>
        <taxon>Hafniaceae</taxon>
        <taxon>Edwardsiella</taxon>
    </lineage>
</organism>
<sequence>MLKIFNTLSRQKEEFKPIHAGEVGMYVCGVTIYDLCHIGHGRTFVCFDVVARYLRYLGYRLKYVRNVTDVDDKIIKRALENQESCEQLTERMLAEMHRDFDALNIARPDVEPRATHHIAEIIALVEQLIARDHAYVASNGDVMFAVDTDPDYGVLSRQDLEQLQAGARVEVADVKRNPMDFVLWKMSKPGEPSWPSPWGEGRPGWHIECSAMNCKQLGSHFDIHGGGSDLMFPHHENEIAQSTCAHDGAYVNCWMHSGMVMIDREKMSKSLGNFFTIRDVLAHYDAETVRYFLMSGHYRSQLNYSEENLKQARAALERLYTALRGTDVAAQPTADETFTTRFRAAMDDDFNTPEAYSVLFDMAREINRLKGEDMAQANALAAQMRGLAHVLGLLEQTPEHFLQSGAAAGDDEVAQIEALIRQRNDARAAKAWALADEARDSLNAMGIVLEDGPQGTTWRRK</sequence>
<proteinExistence type="inferred from homology"/>
<keyword id="KW-0030">Aminoacyl-tRNA synthetase</keyword>
<keyword id="KW-0067">ATP-binding</keyword>
<keyword id="KW-0963">Cytoplasm</keyword>
<keyword id="KW-0436">Ligase</keyword>
<keyword id="KW-0479">Metal-binding</keyword>
<keyword id="KW-0547">Nucleotide-binding</keyword>
<keyword id="KW-0648">Protein biosynthesis</keyword>
<keyword id="KW-0862">Zinc</keyword>
<feature type="chain" id="PRO_1000202121" description="Cysteine--tRNA ligase">
    <location>
        <begin position="1"/>
        <end position="461"/>
    </location>
</feature>
<feature type="short sequence motif" description="'HIGH' region">
    <location>
        <begin position="30"/>
        <end position="40"/>
    </location>
</feature>
<feature type="short sequence motif" description="'KMSKS' region">
    <location>
        <begin position="266"/>
        <end position="270"/>
    </location>
</feature>
<feature type="binding site" evidence="1">
    <location>
        <position position="28"/>
    </location>
    <ligand>
        <name>Zn(2+)</name>
        <dbReference type="ChEBI" id="CHEBI:29105"/>
    </ligand>
</feature>
<feature type="binding site" evidence="1">
    <location>
        <position position="209"/>
    </location>
    <ligand>
        <name>Zn(2+)</name>
        <dbReference type="ChEBI" id="CHEBI:29105"/>
    </ligand>
</feature>
<feature type="binding site" evidence="1">
    <location>
        <position position="234"/>
    </location>
    <ligand>
        <name>Zn(2+)</name>
        <dbReference type="ChEBI" id="CHEBI:29105"/>
    </ligand>
</feature>
<feature type="binding site" evidence="1">
    <location>
        <position position="238"/>
    </location>
    <ligand>
        <name>Zn(2+)</name>
        <dbReference type="ChEBI" id="CHEBI:29105"/>
    </ligand>
</feature>
<feature type="binding site" evidence="1">
    <location>
        <position position="269"/>
    </location>
    <ligand>
        <name>ATP</name>
        <dbReference type="ChEBI" id="CHEBI:30616"/>
    </ligand>
</feature>
<evidence type="ECO:0000255" key="1">
    <source>
        <dbReference type="HAMAP-Rule" id="MF_00041"/>
    </source>
</evidence>